<organism>
    <name type="scientific">Chlorobium phaeovibrioides (strain DSM 265 / 1930)</name>
    <name type="common">Prosthecochloris vibrioformis (strain DSM 265)</name>
    <dbReference type="NCBI Taxonomy" id="290318"/>
    <lineage>
        <taxon>Bacteria</taxon>
        <taxon>Pseudomonadati</taxon>
        <taxon>Chlorobiota</taxon>
        <taxon>Chlorobiia</taxon>
        <taxon>Chlorobiales</taxon>
        <taxon>Chlorobiaceae</taxon>
        <taxon>Chlorobium/Pelodictyon group</taxon>
        <taxon>Chlorobium</taxon>
    </lineage>
</organism>
<protein>
    <recommendedName>
        <fullName evidence="2">Small ribosomal subunit protein uS12</fullName>
    </recommendedName>
    <alternativeName>
        <fullName evidence="4">30S ribosomal protein S12</fullName>
    </alternativeName>
</protein>
<keyword id="KW-0488">Methylation</keyword>
<keyword id="KW-0687">Ribonucleoprotein</keyword>
<keyword id="KW-0689">Ribosomal protein</keyword>
<keyword id="KW-0694">RNA-binding</keyword>
<keyword id="KW-0699">rRNA-binding</keyword>
<keyword id="KW-0820">tRNA-binding</keyword>
<reference key="1">
    <citation type="submission" date="2007-03" db="EMBL/GenBank/DDBJ databases">
        <title>Complete sequence of Prosthecochloris vibrioformis DSM 265.</title>
        <authorList>
            <consortium name="US DOE Joint Genome Institute"/>
            <person name="Copeland A."/>
            <person name="Lucas S."/>
            <person name="Lapidus A."/>
            <person name="Barry K."/>
            <person name="Detter J.C."/>
            <person name="Glavina del Rio T."/>
            <person name="Hammon N."/>
            <person name="Israni S."/>
            <person name="Pitluck S."/>
            <person name="Schmutz J."/>
            <person name="Larimer F."/>
            <person name="Land M."/>
            <person name="Hauser L."/>
            <person name="Mikhailova N."/>
            <person name="Li T."/>
            <person name="Overmann J."/>
            <person name="Schuster S.C."/>
            <person name="Bryant D.A."/>
            <person name="Richardson P."/>
        </authorList>
    </citation>
    <scope>NUCLEOTIDE SEQUENCE [LARGE SCALE GENOMIC DNA]</scope>
    <source>
        <strain>DSM 265 / 1930</strain>
    </source>
</reference>
<accession>A4SCQ4</accession>
<gene>
    <name evidence="2" type="primary">rpsL</name>
    <name type="ordered locus">Cvib_0241</name>
</gene>
<feature type="chain" id="PRO_1000080408" description="Small ribosomal subunit protein uS12">
    <location>
        <begin position="1"/>
        <end position="132"/>
    </location>
</feature>
<feature type="region of interest" description="Disordered" evidence="3">
    <location>
        <begin position="103"/>
        <end position="132"/>
    </location>
</feature>
<feature type="modified residue" description="3-methylthioaspartic acid" evidence="1">
    <location>
        <position position="89"/>
    </location>
</feature>
<comment type="function">
    <text evidence="2">With S4 and S5 plays an important role in translational accuracy.</text>
</comment>
<comment type="function">
    <text evidence="2">Interacts with and stabilizes bases of the 16S rRNA that are involved in tRNA selection in the A site and with the mRNA backbone. Located at the interface of the 30S and 50S subunits, it traverses the body of the 30S subunit contacting proteins on the other side and probably holding the rRNA structure together. The combined cluster of proteins S8, S12 and S17 appears to hold together the shoulder and platform of the 30S subunit.</text>
</comment>
<comment type="subunit">
    <text evidence="2">Part of the 30S ribosomal subunit. Contacts proteins S8 and S17. May interact with IF1 in the 30S initiation complex.</text>
</comment>
<comment type="similarity">
    <text evidence="2">Belongs to the universal ribosomal protein uS12 family.</text>
</comment>
<proteinExistence type="inferred from homology"/>
<dbReference type="EMBL" id="CP000607">
    <property type="protein sequence ID" value="ABP36263.1"/>
    <property type="molecule type" value="Genomic_DNA"/>
</dbReference>
<dbReference type="SMR" id="A4SCQ4"/>
<dbReference type="STRING" id="290318.Cvib_0241"/>
<dbReference type="KEGG" id="pvi:Cvib_0241"/>
<dbReference type="eggNOG" id="COG0048">
    <property type="taxonomic scope" value="Bacteria"/>
</dbReference>
<dbReference type="HOGENOM" id="CLU_104295_1_2_10"/>
<dbReference type="OrthoDB" id="9802366at2"/>
<dbReference type="GO" id="GO:0015935">
    <property type="term" value="C:small ribosomal subunit"/>
    <property type="evidence" value="ECO:0007669"/>
    <property type="project" value="InterPro"/>
</dbReference>
<dbReference type="GO" id="GO:0019843">
    <property type="term" value="F:rRNA binding"/>
    <property type="evidence" value="ECO:0007669"/>
    <property type="project" value="UniProtKB-UniRule"/>
</dbReference>
<dbReference type="GO" id="GO:0003735">
    <property type="term" value="F:structural constituent of ribosome"/>
    <property type="evidence" value="ECO:0007669"/>
    <property type="project" value="InterPro"/>
</dbReference>
<dbReference type="GO" id="GO:0000049">
    <property type="term" value="F:tRNA binding"/>
    <property type="evidence" value="ECO:0007669"/>
    <property type="project" value="UniProtKB-UniRule"/>
</dbReference>
<dbReference type="GO" id="GO:0006412">
    <property type="term" value="P:translation"/>
    <property type="evidence" value="ECO:0007669"/>
    <property type="project" value="UniProtKB-UniRule"/>
</dbReference>
<dbReference type="CDD" id="cd03368">
    <property type="entry name" value="Ribosomal_S12"/>
    <property type="match status" value="1"/>
</dbReference>
<dbReference type="FunFam" id="2.40.50.140:FF:000001">
    <property type="entry name" value="30S ribosomal protein S12"/>
    <property type="match status" value="1"/>
</dbReference>
<dbReference type="Gene3D" id="2.40.50.140">
    <property type="entry name" value="Nucleic acid-binding proteins"/>
    <property type="match status" value="1"/>
</dbReference>
<dbReference type="HAMAP" id="MF_00403_B">
    <property type="entry name" value="Ribosomal_uS12_B"/>
    <property type="match status" value="1"/>
</dbReference>
<dbReference type="InterPro" id="IPR012340">
    <property type="entry name" value="NA-bd_OB-fold"/>
</dbReference>
<dbReference type="InterPro" id="IPR006032">
    <property type="entry name" value="Ribosomal_uS12"/>
</dbReference>
<dbReference type="InterPro" id="IPR005679">
    <property type="entry name" value="Ribosomal_uS12_bac"/>
</dbReference>
<dbReference type="NCBIfam" id="TIGR00981">
    <property type="entry name" value="rpsL_bact"/>
    <property type="match status" value="1"/>
</dbReference>
<dbReference type="PANTHER" id="PTHR11652">
    <property type="entry name" value="30S RIBOSOMAL PROTEIN S12 FAMILY MEMBER"/>
    <property type="match status" value="1"/>
</dbReference>
<dbReference type="Pfam" id="PF00164">
    <property type="entry name" value="Ribosom_S12_S23"/>
    <property type="match status" value="1"/>
</dbReference>
<dbReference type="PIRSF" id="PIRSF002133">
    <property type="entry name" value="Ribosomal_S12/S23"/>
    <property type="match status" value="1"/>
</dbReference>
<dbReference type="PRINTS" id="PR01034">
    <property type="entry name" value="RIBOSOMALS12"/>
</dbReference>
<dbReference type="SUPFAM" id="SSF50249">
    <property type="entry name" value="Nucleic acid-binding proteins"/>
    <property type="match status" value="1"/>
</dbReference>
<dbReference type="PROSITE" id="PS00055">
    <property type="entry name" value="RIBOSOMAL_S12"/>
    <property type="match status" value="1"/>
</dbReference>
<evidence type="ECO:0000250" key="1"/>
<evidence type="ECO:0000255" key="2">
    <source>
        <dbReference type="HAMAP-Rule" id="MF_00403"/>
    </source>
</evidence>
<evidence type="ECO:0000256" key="3">
    <source>
        <dbReference type="SAM" id="MobiDB-lite"/>
    </source>
</evidence>
<evidence type="ECO:0000305" key="4"/>
<name>RS12_CHLPM</name>
<sequence>MPTIQQLIRHGRSVKASKTASPALEKCPQKRGVCTRVYTTTPKKPNSALRKVARVRLSNKIEVTAYIPGEGHNLQEHSIVLIRGGRVKDLPGVRYHIVRGSLDTSGVADRRQSRSKYGAKQPKEGGAAKGKK</sequence>